<keyword id="KW-0963">Cytoplasm</keyword>
<keyword id="KW-0276">Fatty acid metabolism</keyword>
<keyword id="KW-0378">Hydrolase</keyword>
<keyword id="KW-0443">Lipid metabolism</keyword>
<keyword id="KW-0539">Nucleus</keyword>
<keyword id="KW-1185">Reference proteome</keyword>
<keyword id="KW-0719">Serine esterase</keyword>
<reference key="1">
    <citation type="journal article" date="2004" name="Proc. Natl. Acad. Sci. U.S.A.">
        <title>The diploid genome sequence of Candida albicans.</title>
        <authorList>
            <person name="Jones T."/>
            <person name="Federspiel N.A."/>
            <person name="Chibana H."/>
            <person name="Dungan J."/>
            <person name="Kalman S."/>
            <person name="Magee B.B."/>
            <person name="Newport G."/>
            <person name="Thorstenson Y.R."/>
            <person name="Agabian N."/>
            <person name="Magee P.T."/>
            <person name="Davis R.W."/>
            <person name="Scherer S."/>
        </authorList>
    </citation>
    <scope>NUCLEOTIDE SEQUENCE [LARGE SCALE GENOMIC DNA]</scope>
    <source>
        <strain>SC5314 / ATCC MYA-2876</strain>
    </source>
</reference>
<reference key="2">
    <citation type="journal article" date="2007" name="Genome Biol.">
        <title>Assembly of the Candida albicans genome into sixteen supercontigs aligned on the eight chromosomes.</title>
        <authorList>
            <person name="van het Hoog M."/>
            <person name="Rast T.J."/>
            <person name="Martchenko M."/>
            <person name="Grindle S."/>
            <person name="Dignard D."/>
            <person name="Hogues H."/>
            <person name="Cuomo C."/>
            <person name="Berriman M."/>
            <person name="Scherer S."/>
            <person name="Magee B.B."/>
            <person name="Whiteway M."/>
            <person name="Chibana H."/>
            <person name="Nantel A."/>
            <person name="Magee P.T."/>
        </authorList>
    </citation>
    <scope>GENOME REANNOTATION</scope>
    <source>
        <strain>SC5314 / ATCC MYA-2876</strain>
    </source>
</reference>
<reference key="3">
    <citation type="journal article" date="2013" name="Genome Biol.">
        <title>Assembly of a phased diploid Candida albicans genome facilitates allele-specific measurements and provides a simple model for repeat and indel structure.</title>
        <authorList>
            <person name="Muzzey D."/>
            <person name="Schwartz K."/>
            <person name="Weissman J.S."/>
            <person name="Sherlock G."/>
        </authorList>
    </citation>
    <scope>NUCLEOTIDE SEQUENCE [LARGE SCALE GENOMIC DNA]</scope>
    <scope>GENOME REANNOTATION</scope>
    <source>
        <strain>SC5314 / ATCC MYA-2876</strain>
    </source>
</reference>
<evidence type="ECO:0000250" key="1"/>
<evidence type="ECO:0000250" key="2">
    <source>
        <dbReference type="UniProtKB" id="Q12354"/>
    </source>
</evidence>
<evidence type="ECO:0000305" key="3"/>
<name>APTH1_CANAL</name>
<accession>Q5AGD1</accession>
<accession>A0A1D8PNF2</accession>
<accession>Q5AGR8</accession>
<proteinExistence type="inferred from homology"/>
<organism>
    <name type="scientific">Candida albicans (strain SC5314 / ATCC MYA-2876)</name>
    <name type="common">Yeast</name>
    <dbReference type="NCBI Taxonomy" id="237561"/>
    <lineage>
        <taxon>Eukaryota</taxon>
        <taxon>Fungi</taxon>
        <taxon>Dikarya</taxon>
        <taxon>Ascomycota</taxon>
        <taxon>Saccharomycotina</taxon>
        <taxon>Pichiomycetes</taxon>
        <taxon>Debaryomycetaceae</taxon>
        <taxon>Candida/Lodderomyces clade</taxon>
        <taxon>Candida</taxon>
    </lineage>
</organism>
<gene>
    <name type="ordered locus">CAALFM_C502400WA</name>
    <name type="ORF">CaO19.11723</name>
    <name type="ORF">CaO19.4248</name>
</gene>
<sequence length="231" mass="25340">MSVSAIRIPANGSSAKAAVIFLHGLGDSGDGWSWLPQLVSQSKLINDPINYVFPNAPKIPVTINNGFAMPAWFDIYELGNPHAKQDVTGFFKSCEVLKEFILEQHNKFNIPLEKIIIGGFSQGAAISLATLALLDTKIGGCVALSGFCPVRNEITDRYNKNPGVNFDTPIFQGHGTVDPVINYDYGKQTSELYKQLGFKNLKFNTYEGVAHSASEEELADVIKFIKNIVEK</sequence>
<dbReference type="EC" id="3.1.2.-" evidence="2"/>
<dbReference type="EC" id="3.1.2.22" evidence="2"/>
<dbReference type="EMBL" id="CP017627">
    <property type="protein sequence ID" value="AOW29666.1"/>
    <property type="status" value="ALT_INIT"/>
    <property type="molecule type" value="Genomic_DNA"/>
</dbReference>
<dbReference type="RefSeq" id="XP_720557.2">
    <property type="nucleotide sequence ID" value="XM_715464.2"/>
</dbReference>
<dbReference type="SMR" id="Q5AGD1"/>
<dbReference type="FunCoup" id="Q5AGD1">
    <property type="interactions" value="504"/>
</dbReference>
<dbReference type="STRING" id="237561.Q5AGD1"/>
<dbReference type="ESTHER" id="canal-apth1">
    <property type="family name" value="LYsophospholipase_carboxylesterase"/>
</dbReference>
<dbReference type="GeneID" id="3637724"/>
<dbReference type="KEGG" id="cal:CAALFM_C502400WA"/>
<dbReference type="eggNOG" id="KOG2112">
    <property type="taxonomic scope" value="Eukaryota"/>
</dbReference>
<dbReference type="HOGENOM" id="CLU_049413_3_3_1"/>
<dbReference type="InParanoid" id="Q5AGD1"/>
<dbReference type="OrthoDB" id="2418081at2759"/>
<dbReference type="PRO" id="PR:Q5AGD1"/>
<dbReference type="Proteomes" id="UP000000559">
    <property type="component" value="Chromosome 5"/>
</dbReference>
<dbReference type="GO" id="GO:0005737">
    <property type="term" value="C:cytoplasm"/>
    <property type="evidence" value="ECO:0000318"/>
    <property type="project" value="GO_Central"/>
</dbReference>
<dbReference type="GO" id="GO:0005634">
    <property type="term" value="C:nucleus"/>
    <property type="evidence" value="ECO:0007669"/>
    <property type="project" value="UniProtKB-SubCell"/>
</dbReference>
<dbReference type="GO" id="GO:0052689">
    <property type="term" value="F:carboxylic ester hydrolase activity"/>
    <property type="evidence" value="ECO:0000318"/>
    <property type="project" value="GO_Central"/>
</dbReference>
<dbReference type="GO" id="GO:0008474">
    <property type="term" value="F:palmitoyl-(protein) hydrolase activity"/>
    <property type="evidence" value="ECO:0000318"/>
    <property type="project" value="GO_Central"/>
</dbReference>
<dbReference type="GO" id="GO:0006631">
    <property type="term" value="P:fatty acid metabolic process"/>
    <property type="evidence" value="ECO:0007669"/>
    <property type="project" value="UniProtKB-KW"/>
</dbReference>
<dbReference type="FunFam" id="3.40.50.1820:FF:000786">
    <property type="entry name" value="Acyl-protein thioesterase 1"/>
    <property type="match status" value="1"/>
</dbReference>
<dbReference type="Gene3D" id="3.40.50.1820">
    <property type="entry name" value="alpha/beta hydrolase"/>
    <property type="match status" value="1"/>
</dbReference>
<dbReference type="InterPro" id="IPR029058">
    <property type="entry name" value="AB_hydrolase_fold"/>
</dbReference>
<dbReference type="InterPro" id="IPR050565">
    <property type="entry name" value="LYPA1-2/EST-like"/>
</dbReference>
<dbReference type="InterPro" id="IPR003140">
    <property type="entry name" value="PLipase/COase/thioEstase"/>
</dbReference>
<dbReference type="PANTHER" id="PTHR10655:SF17">
    <property type="entry name" value="LYSOPHOSPHOLIPASE-LIKE PROTEIN 1"/>
    <property type="match status" value="1"/>
</dbReference>
<dbReference type="PANTHER" id="PTHR10655">
    <property type="entry name" value="LYSOPHOSPHOLIPASE-RELATED"/>
    <property type="match status" value="1"/>
</dbReference>
<dbReference type="Pfam" id="PF02230">
    <property type="entry name" value="Abhydrolase_2"/>
    <property type="match status" value="1"/>
</dbReference>
<dbReference type="SUPFAM" id="SSF53474">
    <property type="entry name" value="alpha/beta-Hydrolases"/>
    <property type="match status" value="1"/>
</dbReference>
<comment type="function">
    <text evidence="2">Hydrolyzes fatty acids from S-acylated cysteine residues in proteins with a strong preference for palmitoylated G-alpha proteins over other acyl substrates. Mediates the deacylation of G-alpha proteins such as GPA1 in vivo, but has weak or no activity toward palmitoylated Ras proteins. Has weak lysophospholipase activity in vitro; however such activity may not exist in vivo.</text>
</comment>
<comment type="catalytic activity">
    <reaction evidence="2">
        <text>S-hexadecanoyl-L-cysteinyl-[protein] + H2O = L-cysteinyl-[protein] + hexadecanoate + H(+)</text>
        <dbReference type="Rhea" id="RHEA:19233"/>
        <dbReference type="Rhea" id="RHEA-COMP:10131"/>
        <dbReference type="Rhea" id="RHEA-COMP:11032"/>
        <dbReference type="ChEBI" id="CHEBI:7896"/>
        <dbReference type="ChEBI" id="CHEBI:15377"/>
        <dbReference type="ChEBI" id="CHEBI:15378"/>
        <dbReference type="ChEBI" id="CHEBI:29950"/>
        <dbReference type="ChEBI" id="CHEBI:74151"/>
        <dbReference type="EC" id="3.1.2.22"/>
    </reaction>
</comment>
<comment type="subcellular location">
    <subcellularLocation>
        <location evidence="2">Cytoplasm</location>
    </subcellularLocation>
    <subcellularLocation>
        <location evidence="2">Nucleus</location>
    </subcellularLocation>
</comment>
<comment type="similarity">
    <text evidence="3">Belongs to the AB hydrolase superfamily. AB hydrolase 2 family.</text>
</comment>
<comment type="sequence caution" evidence="3">
    <conflict type="erroneous initiation">
        <sequence resource="EMBL-CDS" id="AOW29666"/>
    </conflict>
    <text>Extended N-terminus.</text>
</comment>
<protein>
    <recommendedName>
        <fullName>Acyl-protein thioesterase 1</fullName>
        <ecNumber evidence="2">3.1.2.-</ecNumber>
    </recommendedName>
    <alternativeName>
        <fullName>Palmitoyl-protein hydrolase</fullName>
        <ecNumber evidence="2">3.1.2.22</ecNumber>
    </alternativeName>
</protein>
<feature type="chain" id="PRO_0000229005" description="Acyl-protein thioesterase 1">
    <location>
        <begin position="1"/>
        <end position="231"/>
    </location>
</feature>
<feature type="active site" description="Charge relay system" evidence="1">
    <location>
        <position position="121"/>
    </location>
</feature>
<feature type="active site" description="Charge relay system" evidence="1">
    <location>
        <position position="178"/>
    </location>
</feature>
<feature type="active site" description="Charge relay system" evidence="1">
    <location>
        <position position="211"/>
    </location>
</feature>